<reference key="1">
    <citation type="journal article" date="2006" name="Lancet">
        <title>Complete genome sequence of USA300, an epidemic clone of community-acquired meticillin-resistant Staphylococcus aureus.</title>
        <authorList>
            <person name="Diep B.A."/>
            <person name="Gill S.R."/>
            <person name="Chang R.F."/>
            <person name="Phan T.H."/>
            <person name="Chen J.H."/>
            <person name="Davidson M.G."/>
            <person name="Lin F."/>
            <person name="Lin J."/>
            <person name="Carleton H.A."/>
            <person name="Mongodin E.F."/>
            <person name="Sensabaugh G.F."/>
            <person name="Perdreau-Remington F."/>
        </authorList>
    </citation>
    <scope>NUCLEOTIDE SEQUENCE [LARGE SCALE GENOMIC DNA]</scope>
    <source>
        <strain>USA300</strain>
    </source>
</reference>
<sequence>MTKYTFKPKDFKAFNVEGLDARMEALNEYIRPQLRELGEYFSDFFTSQTGETFYPHVAKHARRSVNPPKDTWVAFATNKRGYKMLPHFQIGMFEDQLFVMFGIMHEAKDKATRAKVFERKFKAIQQLPDDYRVCLDHMKPDKPFIKDLTDDDLIEAIQRAINVKKGEFFIARAITPQDKRLKSDKAFIAFLEETFDQFLPFYSA</sequence>
<evidence type="ECO:0000255" key="1">
    <source>
        <dbReference type="HAMAP-Rule" id="MF_01851"/>
    </source>
</evidence>
<protein>
    <recommendedName>
        <fullName evidence="1">UPF0637 protein SAUSA300_1006</fullName>
    </recommendedName>
</protein>
<gene>
    <name type="ordered locus">SAUSA300_1006</name>
</gene>
<organism>
    <name type="scientific">Staphylococcus aureus (strain USA300)</name>
    <dbReference type="NCBI Taxonomy" id="367830"/>
    <lineage>
        <taxon>Bacteria</taxon>
        <taxon>Bacillati</taxon>
        <taxon>Bacillota</taxon>
        <taxon>Bacilli</taxon>
        <taxon>Bacillales</taxon>
        <taxon>Staphylococcaceae</taxon>
        <taxon>Staphylococcus</taxon>
    </lineage>
</organism>
<feature type="chain" id="PRO_0000348332" description="UPF0637 protein SAUSA300_1006">
    <location>
        <begin position="1"/>
        <end position="204"/>
    </location>
</feature>
<name>Y1006_STAA3</name>
<comment type="similarity">
    <text evidence="1">Belongs to the UPF0637 family.</text>
</comment>
<accession>Q2FHX4</accession>
<proteinExistence type="inferred from homology"/>
<dbReference type="EMBL" id="CP000255">
    <property type="protein sequence ID" value="ABD21240.1"/>
    <property type="molecule type" value="Genomic_DNA"/>
</dbReference>
<dbReference type="RefSeq" id="WP_000170610.1">
    <property type="nucleotide sequence ID" value="NZ_CP027476.1"/>
</dbReference>
<dbReference type="SMR" id="Q2FHX4"/>
<dbReference type="KEGG" id="saa:SAUSA300_1006"/>
<dbReference type="HOGENOM" id="CLU_096059_0_0_9"/>
<dbReference type="Proteomes" id="UP000001939">
    <property type="component" value="Chromosome"/>
</dbReference>
<dbReference type="Gene3D" id="3.30.930.20">
    <property type="entry name" value="Protein of unknown function DUF1054"/>
    <property type="match status" value="1"/>
</dbReference>
<dbReference type="HAMAP" id="MF_01851">
    <property type="entry name" value="UPF0637"/>
    <property type="match status" value="1"/>
</dbReference>
<dbReference type="InterPro" id="IPR009403">
    <property type="entry name" value="UPF0637"/>
</dbReference>
<dbReference type="InterPro" id="IPR053707">
    <property type="entry name" value="UPF0637_domain_sf"/>
</dbReference>
<dbReference type="Pfam" id="PF06335">
    <property type="entry name" value="DUF1054"/>
    <property type="match status" value="1"/>
</dbReference>
<dbReference type="PIRSF" id="PIRSF021332">
    <property type="entry name" value="DUF1054"/>
    <property type="match status" value="1"/>
</dbReference>
<dbReference type="SUPFAM" id="SSF142913">
    <property type="entry name" value="YktB/PF0168-like"/>
    <property type="match status" value="1"/>
</dbReference>